<name>LFTR_ECO45</name>
<feature type="chain" id="PRO_1000131918" description="Leucyl/phenylalanyl-tRNA--protein transferase">
    <location>
        <begin position="1"/>
        <end position="234"/>
    </location>
</feature>
<keyword id="KW-0012">Acyltransferase</keyword>
<keyword id="KW-0963">Cytoplasm</keyword>
<keyword id="KW-1185">Reference proteome</keyword>
<keyword id="KW-0808">Transferase</keyword>
<sequence length="234" mass="26704">MRLVQLSRHSIAFPSPEGALREPNGLLALGGDLSPARLLMAYQRGIFPWFSPGDPILWWSPDPRAVLWPESLHISRSMKRFHKRSPYRVTMNYAFGQVIEGCASDREEGTWITRGVVEAYHRLHELGHAHSIEVWREDELVGGMYGVAQGTLFCGESMFSRMENASKTALLVFCDEFIRHGGKLIDCQVLNDHTASLGACEIPRRDYLNYLNQMRLGRLPNNFWVPRCLFSPQE</sequence>
<protein>
    <recommendedName>
        <fullName evidence="1">Leucyl/phenylalanyl-tRNA--protein transferase</fullName>
        <ecNumber evidence="1">2.3.2.6</ecNumber>
    </recommendedName>
    <alternativeName>
        <fullName evidence="1">L/F-transferase</fullName>
    </alternativeName>
    <alternativeName>
        <fullName evidence="1">Leucyltransferase</fullName>
    </alternativeName>
    <alternativeName>
        <fullName evidence="1">Phenyalanyltransferase</fullName>
    </alternativeName>
</protein>
<evidence type="ECO:0000255" key="1">
    <source>
        <dbReference type="HAMAP-Rule" id="MF_00688"/>
    </source>
</evidence>
<proteinExistence type="inferred from homology"/>
<dbReference type="EC" id="2.3.2.6" evidence="1"/>
<dbReference type="EMBL" id="CU928161">
    <property type="protein sequence ID" value="CAR02248.1"/>
    <property type="molecule type" value="Genomic_DNA"/>
</dbReference>
<dbReference type="RefSeq" id="WP_001241673.1">
    <property type="nucleotide sequence ID" value="NC_011742.1"/>
</dbReference>
<dbReference type="SMR" id="B7MHJ7"/>
<dbReference type="KEGG" id="ecz:ECS88_0914"/>
<dbReference type="HOGENOM" id="CLU_075045_0_0_6"/>
<dbReference type="Proteomes" id="UP000000747">
    <property type="component" value="Chromosome"/>
</dbReference>
<dbReference type="GO" id="GO:0005737">
    <property type="term" value="C:cytoplasm"/>
    <property type="evidence" value="ECO:0007669"/>
    <property type="project" value="UniProtKB-SubCell"/>
</dbReference>
<dbReference type="GO" id="GO:0008914">
    <property type="term" value="F:leucyl-tRNA--protein transferase activity"/>
    <property type="evidence" value="ECO:0007669"/>
    <property type="project" value="UniProtKB-UniRule"/>
</dbReference>
<dbReference type="GO" id="GO:0030163">
    <property type="term" value="P:protein catabolic process"/>
    <property type="evidence" value="ECO:0007669"/>
    <property type="project" value="UniProtKB-UniRule"/>
</dbReference>
<dbReference type="FunFam" id="3.30.70.3550:FF:000001">
    <property type="entry name" value="Leucyl/phenylalanyl-tRNA--protein transferase"/>
    <property type="match status" value="1"/>
</dbReference>
<dbReference type="FunFam" id="3.40.630.70:FF:000001">
    <property type="entry name" value="Leucyl/phenylalanyl-tRNA--protein transferase"/>
    <property type="match status" value="1"/>
</dbReference>
<dbReference type="Gene3D" id="3.40.630.70">
    <property type="entry name" value="Leucyl/phenylalanyl-tRNA-protein transferase, C-terminal domain"/>
    <property type="match status" value="1"/>
</dbReference>
<dbReference type="Gene3D" id="3.30.70.3550">
    <property type="entry name" value="Leucyl/phenylalanyl-tRNA-protein transferase, N-terminal domain"/>
    <property type="match status" value="1"/>
</dbReference>
<dbReference type="HAMAP" id="MF_00688">
    <property type="entry name" value="Leu_Phe_trans"/>
    <property type="match status" value="1"/>
</dbReference>
<dbReference type="InterPro" id="IPR016181">
    <property type="entry name" value="Acyl_CoA_acyltransferase"/>
</dbReference>
<dbReference type="InterPro" id="IPR004616">
    <property type="entry name" value="Leu/Phe-tRNA_Trfase"/>
</dbReference>
<dbReference type="InterPro" id="IPR042203">
    <property type="entry name" value="Leu/Phe-tRNA_Trfase_C"/>
</dbReference>
<dbReference type="InterPro" id="IPR042221">
    <property type="entry name" value="Leu/Phe-tRNA_Trfase_N"/>
</dbReference>
<dbReference type="NCBIfam" id="TIGR00667">
    <property type="entry name" value="aat"/>
    <property type="match status" value="1"/>
</dbReference>
<dbReference type="PANTHER" id="PTHR30098">
    <property type="entry name" value="LEUCYL/PHENYLALANYL-TRNA--PROTEIN TRANSFERASE"/>
    <property type="match status" value="1"/>
</dbReference>
<dbReference type="PANTHER" id="PTHR30098:SF2">
    <property type="entry name" value="LEUCYL_PHENYLALANYL-TRNA--PROTEIN TRANSFERASE"/>
    <property type="match status" value="1"/>
</dbReference>
<dbReference type="Pfam" id="PF03588">
    <property type="entry name" value="Leu_Phe_trans"/>
    <property type="match status" value="1"/>
</dbReference>
<dbReference type="SUPFAM" id="SSF55729">
    <property type="entry name" value="Acyl-CoA N-acyltransferases (Nat)"/>
    <property type="match status" value="1"/>
</dbReference>
<accession>B7MHJ7</accession>
<comment type="function">
    <text evidence="1">Functions in the N-end rule pathway of protein degradation where it conjugates Leu, Phe and, less efficiently, Met from aminoacyl-tRNAs to the N-termini of proteins containing an N-terminal arginine or lysine.</text>
</comment>
<comment type="catalytic activity">
    <reaction evidence="1">
        <text>N-terminal L-lysyl-[protein] + L-leucyl-tRNA(Leu) = N-terminal L-leucyl-L-lysyl-[protein] + tRNA(Leu) + H(+)</text>
        <dbReference type="Rhea" id="RHEA:12340"/>
        <dbReference type="Rhea" id="RHEA-COMP:9613"/>
        <dbReference type="Rhea" id="RHEA-COMP:9622"/>
        <dbReference type="Rhea" id="RHEA-COMP:12670"/>
        <dbReference type="Rhea" id="RHEA-COMP:12671"/>
        <dbReference type="ChEBI" id="CHEBI:15378"/>
        <dbReference type="ChEBI" id="CHEBI:65249"/>
        <dbReference type="ChEBI" id="CHEBI:78442"/>
        <dbReference type="ChEBI" id="CHEBI:78494"/>
        <dbReference type="ChEBI" id="CHEBI:133043"/>
        <dbReference type="EC" id="2.3.2.6"/>
    </reaction>
</comment>
<comment type="catalytic activity">
    <reaction evidence="1">
        <text>N-terminal L-arginyl-[protein] + L-leucyl-tRNA(Leu) = N-terminal L-leucyl-L-arginyl-[protein] + tRNA(Leu) + H(+)</text>
        <dbReference type="Rhea" id="RHEA:50416"/>
        <dbReference type="Rhea" id="RHEA-COMP:9613"/>
        <dbReference type="Rhea" id="RHEA-COMP:9622"/>
        <dbReference type="Rhea" id="RHEA-COMP:12672"/>
        <dbReference type="Rhea" id="RHEA-COMP:12673"/>
        <dbReference type="ChEBI" id="CHEBI:15378"/>
        <dbReference type="ChEBI" id="CHEBI:64719"/>
        <dbReference type="ChEBI" id="CHEBI:78442"/>
        <dbReference type="ChEBI" id="CHEBI:78494"/>
        <dbReference type="ChEBI" id="CHEBI:133044"/>
        <dbReference type="EC" id="2.3.2.6"/>
    </reaction>
</comment>
<comment type="catalytic activity">
    <reaction evidence="1">
        <text>L-phenylalanyl-tRNA(Phe) + an N-terminal L-alpha-aminoacyl-[protein] = an N-terminal L-phenylalanyl-L-alpha-aminoacyl-[protein] + tRNA(Phe)</text>
        <dbReference type="Rhea" id="RHEA:43632"/>
        <dbReference type="Rhea" id="RHEA-COMP:9668"/>
        <dbReference type="Rhea" id="RHEA-COMP:9699"/>
        <dbReference type="Rhea" id="RHEA-COMP:10636"/>
        <dbReference type="Rhea" id="RHEA-COMP:10637"/>
        <dbReference type="ChEBI" id="CHEBI:78442"/>
        <dbReference type="ChEBI" id="CHEBI:78531"/>
        <dbReference type="ChEBI" id="CHEBI:78597"/>
        <dbReference type="ChEBI" id="CHEBI:83561"/>
        <dbReference type="EC" id="2.3.2.6"/>
    </reaction>
</comment>
<comment type="subcellular location">
    <subcellularLocation>
        <location evidence="1">Cytoplasm</location>
    </subcellularLocation>
</comment>
<comment type="similarity">
    <text evidence="1">Belongs to the L/F-transferase family.</text>
</comment>
<reference key="1">
    <citation type="journal article" date="2009" name="PLoS Genet.">
        <title>Organised genome dynamics in the Escherichia coli species results in highly diverse adaptive paths.</title>
        <authorList>
            <person name="Touchon M."/>
            <person name="Hoede C."/>
            <person name="Tenaillon O."/>
            <person name="Barbe V."/>
            <person name="Baeriswyl S."/>
            <person name="Bidet P."/>
            <person name="Bingen E."/>
            <person name="Bonacorsi S."/>
            <person name="Bouchier C."/>
            <person name="Bouvet O."/>
            <person name="Calteau A."/>
            <person name="Chiapello H."/>
            <person name="Clermont O."/>
            <person name="Cruveiller S."/>
            <person name="Danchin A."/>
            <person name="Diard M."/>
            <person name="Dossat C."/>
            <person name="Karoui M.E."/>
            <person name="Frapy E."/>
            <person name="Garry L."/>
            <person name="Ghigo J.M."/>
            <person name="Gilles A.M."/>
            <person name="Johnson J."/>
            <person name="Le Bouguenec C."/>
            <person name="Lescat M."/>
            <person name="Mangenot S."/>
            <person name="Martinez-Jehanne V."/>
            <person name="Matic I."/>
            <person name="Nassif X."/>
            <person name="Oztas S."/>
            <person name="Petit M.A."/>
            <person name="Pichon C."/>
            <person name="Rouy Z."/>
            <person name="Ruf C.S."/>
            <person name="Schneider D."/>
            <person name="Tourret J."/>
            <person name="Vacherie B."/>
            <person name="Vallenet D."/>
            <person name="Medigue C."/>
            <person name="Rocha E.P.C."/>
            <person name="Denamur E."/>
        </authorList>
    </citation>
    <scope>NUCLEOTIDE SEQUENCE [LARGE SCALE GENOMIC DNA]</scope>
    <source>
        <strain>S88 / ExPEC</strain>
    </source>
</reference>
<gene>
    <name evidence="1" type="primary">aat</name>
    <name type="ordered locus">ECS88_0914</name>
</gene>
<organism>
    <name type="scientific">Escherichia coli O45:K1 (strain S88 / ExPEC)</name>
    <dbReference type="NCBI Taxonomy" id="585035"/>
    <lineage>
        <taxon>Bacteria</taxon>
        <taxon>Pseudomonadati</taxon>
        <taxon>Pseudomonadota</taxon>
        <taxon>Gammaproteobacteria</taxon>
        <taxon>Enterobacterales</taxon>
        <taxon>Enterobacteriaceae</taxon>
        <taxon>Escherichia</taxon>
    </lineage>
</organism>